<keyword id="KW-0067">ATP-binding</keyword>
<keyword id="KW-0119">Carbohydrate metabolism</keyword>
<keyword id="KW-0418">Kinase</keyword>
<keyword id="KW-0511">Multifunctional enzyme</keyword>
<keyword id="KW-0547">Nucleotide-binding</keyword>
<keyword id="KW-0548">Nucleotidyltransferase</keyword>
<keyword id="KW-0808">Transferase</keyword>
<name>HLDE_CAUSK</name>
<accession>B0T663</accession>
<comment type="function">
    <text evidence="1">Catalyzes the phosphorylation of D-glycero-D-manno-heptose 7-phosphate at the C-1 position to selectively form D-glycero-beta-D-manno-heptose-1,7-bisphosphate.</text>
</comment>
<comment type="function">
    <text evidence="1">Catalyzes the ADP transfer from ATP to D-glycero-beta-D-manno-heptose 1-phosphate, yielding ADP-D-glycero-beta-D-manno-heptose.</text>
</comment>
<comment type="catalytic activity">
    <reaction evidence="1">
        <text>D-glycero-beta-D-manno-heptose 7-phosphate + ATP = D-glycero-beta-D-manno-heptose 1,7-bisphosphate + ADP + H(+)</text>
        <dbReference type="Rhea" id="RHEA:27473"/>
        <dbReference type="ChEBI" id="CHEBI:15378"/>
        <dbReference type="ChEBI" id="CHEBI:30616"/>
        <dbReference type="ChEBI" id="CHEBI:60204"/>
        <dbReference type="ChEBI" id="CHEBI:60208"/>
        <dbReference type="ChEBI" id="CHEBI:456216"/>
        <dbReference type="EC" id="2.7.1.167"/>
    </reaction>
</comment>
<comment type="catalytic activity">
    <reaction evidence="1">
        <text>D-glycero-beta-D-manno-heptose 1-phosphate + ATP + H(+) = ADP-D-glycero-beta-D-manno-heptose + diphosphate</text>
        <dbReference type="Rhea" id="RHEA:27465"/>
        <dbReference type="ChEBI" id="CHEBI:15378"/>
        <dbReference type="ChEBI" id="CHEBI:30616"/>
        <dbReference type="ChEBI" id="CHEBI:33019"/>
        <dbReference type="ChEBI" id="CHEBI:59967"/>
        <dbReference type="ChEBI" id="CHEBI:61593"/>
        <dbReference type="EC" id="2.7.7.70"/>
    </reaction>
</comment>
<comment type="pathway">
    <text evidence="1">Nucleotide-sugar biosynthesis; ADP-L-glycero-beta-D-manno-heptose biosynthesis; ADP-L-glycero-beta-D-manno-heptose from D-glycero-beta-D-manno-heptose 7-phosphate: step 1/4.</text>
</comment>
<comment type="pathway">
    <text evidence="1">Nucleotide-sugar biosynthesis; ADP-L-glycero-beta-D-manno-heptose biosynthesis; ADP-L-glycero-beta-D-manno-heptose from D-glycero-beta-D-manno-heptose 7-phosphate: step 3/4.</text>
</comment>
<comment type="subunit">
    <text evidence="1">Homodimer.</text>
</comment>
<comment type="similarity">
    <text evidence="1">In the N-terminal section; belongs to the carbohydrate kinase PfkB family.</text>
</comment>
<comment type="similarity">
    <text evidence="1">In the C-terminal section; belongs to the cytidylyltransferase family.</text>
</comment>
<organism>
    <name type="scientific">Caulobacter sp. (strain K31)</name>
    <dbReference type="NCBI Taxonomy" id="366602"/>
    <lineage>
        <taxon>Bacteria</taxon>
        <taxon>Pseudomonadati</taxon>
        <taxon>Pseudomonadota</taxon>
        <taxon>Alphaproteobacteria</taxon>
        <taxon>Caulobacterales</taxon>
        <taxon>Caulobacteraceae</taxon>
        <taxon>Caulobacter</taxon>
    </lineage>
</organism>
<dbReference type="EC" id="2.7.1.167" evidence="1"/>
<dbReference type="EC" id="2.7.7.70" evidence="1"/>
<dbReference type="EMBL" id="CP000927">
    <property type="protein sequence ID" value="ABZ74066.1"/>
    <property type="molecule type" value="Genomic_DNA"/>
</dbReference>
<dbReference type="SMR" id="B0T663"/>
<dbReference type="STRING" id="366602.Caul_4946"/>
<dbReference type="KEGG" id="cak:Caul_4946"/>
<dbReference type="eggNOG" id="COG0615">
    <property type="taxonomic scope" value="Bacteria"/>
</dbReference>
<dbReference type="eggNOG" id="COG2870">
    <property type="taxonomic scope" value="Bacteria"/>
</dbReference>
<dbReference type="HOGENOM" id="CLU_021150_2_1_5"/>
<dbReference type="OrthoDB" id="9802794at2"/>
<dbReference type="UniPathway" id="UPA00356">
    <property type="reaction ID" value="UER00437"/>
</dbReference>
<dbReference type="UniPathway" id="UPA00356">
    <property type="reaction ID" value="UER00439"/>
</dbReference>
<dbReference type="GO" id="GO:0005829">
    <property type="term" value="C:cytosol"/>
    <property type="evidence" value="ECO:0007669"/>
    <property type="project" value="TreeGrafter"/>
</dbReference>
<dbReference type="GO" id="GO:0005524">
    <property type="term" value="F:ATP binding"/>
    <property type="evidence" value="ECO:0007669"/>
    <property type="project" value="UniProtKB-UniRule"/>
</dbReference>
<dbReference type="GO" id="GO:0033785">
    <property type="term" value="F:heptose 7-phosphate kinase activity"/>
    <property type="evidence" value="ECO:0007669"/>
    <property type="project" value="UniProtKB-UniRule"/>
</dbReference>
<dbReference type="GO" id="GO:0033786">
    <property type="term" value="F:heptose-1-phosphate adenylyltransferase activity"/>
    <property type="evidence" value="ECO:0007669"/>
    <property type="project" value="UniProtKB-UniRule"/>
</dbReference>
<dbReference type="GO" id="GO:0016773">
    <property type="term" value="F:phosphotransferase activity, alcohol group as acceptor"/>
    <property type="evidence" value="ECO:0007669"/>
    <property type="project" value="InterPro"/>
</dbReference>
<dbReference type="GO" id="GO:0097171">
    <property type="term" value="P:ADP-L-glycero-beta-D-manno-heptose biosynthetic process"/>
    <property type="evidence" value="ECO:0007669"/>
    <property type="project" value="UniProtKB-UniPathway"/>
</dbReference>
<dbReference type="CDD" id="cd01172">
    <property type="entry name" value="RfaE_like"/>
    <property type="match status" value="1"/>
</dbReference>
<dbReference type="FunFam" id="3.40.1190.20:FF:000002">
    <property type="entry name" value="Bifunctional protein HldE"/>
    <property type="match status" value="1"/>
</dbReference>
<dbReference type="Gene3D" id="3.40.1190.20">
    <property type="match status" value="1"/>
</dbReference>
<dbReference type="Gene3D" id="3.40.50.620">
    <property type="entry name" value="HUPs"/>
    <property type="match status" value="1"/>
</dbReference>
<dbReference type="HAMAP" id="MF_01603">
    <property type="entry name" value="HldE"/>
    <property type="match status" value="1"/>
</dbReference>
<dbReference type="InterPro" id="IPR023030">
    <property type="entry name" value="Bifunc_HldE"/>
</dbReference>
<dbReference type="InterPro" id="IPR002173">
    <property type="entry name" value="Carboh/pur_kinase_PfkB_CS"/>
</dbReference>
<dbReference type="InterPro" id="IPR004821">
    <property type="entry name" value="Cyt_trans-like"/>
</dbReference>
<dbReference type="InterPro" id="IPR011611">
    <property type="entry name" value="PfkB_dom"/>
</dbReference>
<dbReference type="InterPro" id="IPR011913">
    <property type="entry name" value="RfaE_dom_I"/>
</dbReference>
<dbReference type="InterPro" id="IPR011914">
    <property type="entry name" value="RfaE_dom_II"/>
</dbReference>
<dbReference type="InterPro" id="IPR029056">
    <property type="entry name" value="Ribokinase-like"/>
</dbReference>
<dbReference type="InterPro" id="IPR014729">
    <property type="entry name" value="Rossmann-like_a/b/a_fold"/>
</dbReference>
<dbReference type="NCBIfam" id="TIGR00125">
    <property type="entry name" value="cyt_tran_rel"/>
    <property type="match status" value="1"/>
</dbReference>
<dbReference type="NCBIfam" id="TIGR02198">
    <property type="entry name" value="rfaE_dom_I"/>
    <property type="match status" value="1"/>
</dbReference>
<dbReference type="NCBIfam" id="TIGR02199">
    <property type="entry name" value="rfaE_dom_II"/>
    <property type="match status" value="1"/>
</dbReference>
<dbReference type="PANTHER" id="PTHR46969">
    <property type="entry name" value="BIFUNCTIONAL PROTEIN HLDE"/>
    <property type="match status" value="1"/>
</dbReference>
<dbReference type="PANTHER" id="PTHR46969:SF1">
    <property type="entry name" value="BIFUNCTIONAL PROTEIN HLDE"/>
    <property type="match status" value="1"/>
</dbReference>
<dbReference type="Pfam" id="PF01467">
    <property type="entry name" value="CTP_transf_like"/>
    <property type="match status" value="1"/>
</dbReference>
<dbReference type="Pfam" id="PF00294">
    <property type="entry name" value="PfkB"/>
    <property type="match status" value="1"/>
</dbReference>
<dbReference type="SUPFAM" id="SSF52374">
    <property type="entry name" value="Nucleotidylyl transferase"/>
    <property type="match status" value="1"/>
</dbReference>
<dbReference type="SUPFAM" id="SSF53613">
    <property type="entry name" value="Ribokinase-like"/>
    <property type="match status" value="1"/>
</dbReference>
<dbReference type="PROSITE" id="PS00583">
    <property type="entry name" value="PFKB_KINASES_1"/>
    <property type="match status" value="1"/>
</dbReference>
<reference key="1">
    <citation type="submission" date="2008-01" db="EMBL/GenBank/DDBJ databases">
        <title>Complete sequence of chromosome of Caulobacter sp. K31.</title>
        <authorList>
            <consortium name="US DOE Joint Genome Institute"/>
            <person name="Copeland A."/>
            <person name="Lucas S."/>
            <person name="Lapidus A."/>
            <person name="Barry K."/>
            <person name="Glavina del Rio T."/>
            <person name="Dalin E."/>
            <person name="Tice H."/>
            <person name="Pitluck S."/>
            <person name="Bruce D."/>
            <person name="Goodwin L."/>
            <person name="Thompson L.S."/>
            <person name="Brettin T."/>
            <person name="Detter J.C."/>
            <person name="Han C."/>
            <person name="Schmutz J."/>
            <person name="Larimer F."/>
            <person name="Land M."/>
            <person name="Hauser L."/>
            <person name="Kyrpides N."/>
            <person name="Kim E."/>
            <person name="Stephens C."/>
            <person name="Richardson P."/>
        </authorList>
    </citation>
    <scope>NUCLEOTIDE SEQUENCE [LARGE SCALE GENOMIC DNA]</scope>
    <source>
        <strain>K31</strain>
    </source>
</reference>
<evidence type="ECO:0000255" key="1">
    <source>
        <dbReference type="HAMAP-Rule" id="MF_01603"/>
    </source>
</evidence>
<feature type="chain" id="PRO_1000088018" description="Bifunctional protein HldE">
    <location>
        <begin position="1"/>
        <end position="488"/>
    </location>
</feature>
<feature type="region of interest" description="Ribokinase">
    <location>
        <begin position="1"/>
        <end position="327"/>
    </location>
</feature>
<feature type="region of interest" description="Cytidylyltransferase">
    <location>
        <begin position="354"/>
        <end position="488"/>
    </location>
</feature>
<feature type="active site" evidence="1">
    <location>
        <position position="272"/>
    </location>
</feature>
<feature type="binding site" evidence="1">
    <location>
        <begin position="201"/>
        <end position="204"/>
    </location>
    <ligand>
        <name>ATP</name>
        <dbReference type="ChEBI" id="CHEBI:30616"/>
    </ligand>
</feature>
<protein>
    <recommendedName>
        <fullName evidence="1">Bifunctional protein HldE</fullName>
    </recommendedName>
    <domain>
        <recommendedName>
            <fullName evidence="1">D-beta-D-heptose 7-phosphate kinase</fullName>
            <ecNumber evidence="1">2.7.1.167</ecNumber>
        </recommendedName>
        <alternativeName>
            <fullName evidence="1">D-beta-D-heptose 7-phosphotransferase</fullName>
        </alternativeName>
        <alternativeName>
            <fullName evidence="1">D-glycero-beta-D-manno-heptose-7-phosphate kinase</fullName>
        </alternativeName>
    </domain>
    <domain>
        <recommendedName>
            <fullName evidence="1">D-beta-D-heptose 1-phosphate adenylyltransferase</fullName>
            <ecNumber evidence="1">2.7.7.70</ecNumber>
        </recommendedName>
        <alternativeName>
            <fullName evidence="1">D-glycero-beta-D-manno-heptose 1-phosphate adenylyltransferase</fullName>
        </alternativeName>
    </domain>
</protein>
<gene>
    <name evidence="1" type="primary">hldE</name>
    <name type="ordered locus">Caul_4946</name>
</gene>
<proteinExistence type="inferred from homology"/>
<sequence length="488" mass="50182">MDDTLAKLPRAFSGATVLVLGDVMLDRFVYGAVDRISPEAPVPVIAVERETTMLGGAGNVARNVAALGGRAVLVGVIGDDDAGRALTAMIDREPSLDSALIVDAKRRTTEKTRYISGSHQMLRADREDRGEADGVALLAAFNAHLREVDVVVLSDYAKGVLTPVVLRAAIAAANAAGKPVIVDPKSRDFSRYDGATLIKPNRREAAEATGVTGAGDEVAAEAADAILSTAPNLAAALITRGRAGMTLAVRGEAPVHLPATALEVFDVSGAGDTVAATLALALARGASPLDAARLANLAAGLVVAKLGTDVVTADELVGLAHGEHADPAVDKIADLDGALAIVAGWRARGLKVGFTNGCFDLLHPGHVSLLAQAKAACDRLIVGLNTDASVQRLKGPTRPVQKETGRATVLASLSAVDLVVLFDEQTPLNLIRAFRPDVLVKGADYTVETVVGSDVVLAYGGKVVLAQLKAGQSTTNLIGRMNAPAVGG</sequence>